<proteinExistence type="inferred from homology"/>
<organism>
    <name type="scientific">Coccidioides immitis (strain RS)</name>
    <name type="common">Valley fever fungus</name>
    <dbReference type="NCBI Taxonomy" id="246410"/>
    <lineage>
        <taxon>Eukaryota</taxon>
        <taxon>Fungi</taxon>
        <taxon>Dikarya</taxon>
        <taxon>Ascomycota</taxon>
        <taxon>Pezizomycotina</taxon>
        <taxon>Eurotiomycetes</taxon>
        <taxon>Eurotiomycetidae</taxon>
        <taxon>Onygenales</taxon>
        <taxon>Onygenaceae</taxon>
        <taxon>Coccidioides</taxon>
    </lineage>
</organism>
<evidence type="ECO:0000250" key="1"/>
<evidence type="ECO:0000256" key="2">
    <source>
        <dbReference type="SAM" id="MobiDB-lite"/>
    </source>
</evidence>
<evidence type="ECO:0000305" key="3"/>
<dbReference type="EMBL" id="GG704914">
    <property type="protein sequence ID" value="EAS33405.3"/>
    <property type="molecule type" value="Genomic_DNA"/>
</dbReference>
<dbReference type="RefSeq" id="XP_001244988.1">
    <property type="nucleotide sequence ID" value="XM_001244987.2"/>
</dbReference>
<dbReference type="SMR" id="Q1DZ34"/>
<dbReference type="FunCoup" id="Q1DZ34">
    <property type="interactions" value="35"/>
</dbReference>
<dbReference type="STRING" id="246410.Q1DZ34"/>
<dbReference type="GeneID" id="4565141"/>
<dbReference type="KEGG" id="cim:CIMG_04429"/>
<dbReference type="VEuPathDB" id="FungiDB:CIMG_04429"/>
<dbReference type="InParanoid" id="Q1DZ34"/>
<dbReference type="OMA" id="CFLTYPP"/>
<dbReference type="OrthoDB" id="21471at2759"/>
<dbReference type="Proteomes" id="UP000001261">
    <property type="component" value="Unassembled WGS sequence"/>
</dbReference>
<dbReference type="GO" id="GO:0005737">
    <property type="term" value="C:cytoplasm"/>
    <property type="evidence" value="ECO:0007669"/>
    <property type="project" value="UniProtKB-SubCell"/>
</dbReference>
<dbReference type="CDD" id="cd24139">
    <property type="entry name" value="SIP5-like"/>
    <property type="match status" value="1"/>
</dbReference>
<dbReference type="InterPro" id="IPR039301">
    <property type="entry name" value="Sip5/DA2"/>
</dbReference>
<dbReference type="PANTHER" id="PTHR31315">
    <property type="entry name" value="PROTEIN SIP5"/>
    <property type="match status" value="1"/>
</dbReference>
<dbReference type="PANTHER" id="PTHR31315:SF1">
    <property type="entry name" value="PROTEIN SIP5"/>
    <property type="match status" value="1"/>
</dbReference>
<feature type="chain" id="PRO_0000333435" description="Protein SIP5">
    <location>
        <begin position="1"/>
        <end position="786"/>
    </location>
</feature>
<feature type="region of interest" description="Disordered" evidence="2">
    <location>
        <begin position="1"/>
        <end position="46"/>
    </location>
</feature>
<feature type="region of interest" description="Disordered" evidence="2">
    <location>
        <begin position="59"/>
        <end position="97"/>
    </location>
</feature>
<feature type="region of interest" description="Disordered" evidence="2">
    <location>
        <begin position="201"/>
        <end position="229"/>
    </location>
</feature>
<feature type="region of interest" description="Disordered" evidence="2">
    <location>
        <begin position="314"/>
        <end position="337"/>
    </location>
</feature>
<feature type="region of interest" description="Disordered" evidence="2">
    <location>
        <begin position="383"/>
        <end position="406"/>
    </location>
</feature>
<feature type="region of interest" description="Disordered" evidence="2">
    <location>
        <begin position="448"/>
        <end position="482"/>
    </location>
</feature>
<feature type="region of interest" description="Disordered" evidence="2">
    <location>
        <begin position="494"/>
        <end position="520"/>
    </location>
</feature>
<feature type="region of interest" description="Disordered" evidence="2">
    <location>
        <begin position="542"/>
        <end position="693"/>
    </location>
</feature>
<feature type="region of interest" description="Disordered" evidence="2">
    <location>
        <begin position="705"/>
        <end position="786"/>
    </location>
</feature>
<feature type="compositionally biased region" description="Basic and acidic residues" evidence="2">
    <location>
        <begin position="7"/>
        <end position="17"/>
    </location>
</feature>
<feature type="compositionally biased region" description="Basic and acidic residues" evidence="2">
    <location>
        <begin position="62"/>
        <end position="97"/>
    </location>
</feature>
<feature type="compositionally biased region" description="Polar residues" evidence="2">
    <location>
        <begin position="201"/>
        <end position="217"/>
    </location>
</feature>
<feature type="compositionally biased region" description="Basic and acidic residues" evidence="2">
    <location>
        <begin position="314"/>
        <end position="333"/>
    </location>
</feature>
<feature type="compositionally biased region" description="Low complexity" evidence="2">
    <location>
        <begin position="383"/>
        <end position="393"/>
    </location>
</feature>
<feature type="compositionally biased region" description="Basic and acidic residues" evidence="2">
    <location>
        <begin position="542"/>
        <end position="574"/>
    </location>
</feature>
<feature type="compositionally biased region" description="Low complexity" evidence="2">
    <location>
        <begin position="577"/>
        <end position="597"/>
    </location>
</feature>
<feature type="compositionally biased region" description="Polar residues" evidence="2">
    <location>
        <begin position="645"/>
        <end position="656"/>
    </location>
</feature>
<feature type="compositionally biased region" description="Low complexity" evidence="2">
    <location>
        <begin position="663"/>
        <end position="675"/>
    </location>
</feature>
<feature type="compositionally biased region" description="Polar residues" evidence="2">
    <location>
        <begin position="682"/>
        <end position="693"/>
    </location>
</feature>
<feature type="compositionally biased region" description="Polar residues" evidence="2">
    <location>
        <begin position="712"/>
        <end position="729"/>
    </location>
</feature>
<feature type="compositionally biased region" description="Basic and acidic residues" evidence="2">
    <location>
        <begin position="760"/>
        <end position="770"/>
    </location>
</feature>
<sequence>MGNAATKESRSSQEHSARHSRGGSTASTAAYDHYRPSDGIHASSSRALRGGRSDFALLGLGAEREPVEHRRETRQEREARKREKENAARIKERQRSMKEEHVDGGYLVTQGVYVGTEDFNKAIVRQLMIERRLAPFWRGLNDFSESWTEHQLMAAARGMPIPAPDEVPPELEYKIPSKSSAEKQPPERNLNTLMVPITSRSQSYNSDTSSINRTISPARSPGALSPTNSFLRGRAKTLASLTTSSKTPASDMAPRELQLPKDPFVNGQPIEAYLYKDASECPICFLYYPPYLNKTRCCDQPICSECFVQIKRPDPHPPEHHDPNNSETTHPDEPEGQLVSEPAACPFCVQPEFGVMYTPPPFRRGLAYAASPGVHALANSSAASSASSLVSGGANPGTRRRAVSISADSPSVITTDRVRPDWATKLAAARAQAARRSAAATALHTAAYMMNNPGGPGEPRRRGMLRRTAGQDSPGGRTAPSHVNAMAYLAERRVVTDRDNASPVDSTTNLAPPRASSRRSRIDELEEMMMMEAIRLSLAAEEERRKKEEKETRKEAKRREKEAKKAEKSAKKAGLDSQNPSNLTSSTSSANSAVQTAGGANSELDMSANKGKGVDRSEPRPGVSTEAGSSTEPPKITIKDLKGEQFSSMLEGSSKNMHLRHVSSASSSNSSLVESAFGESIGSGTPHNGSSSSLAAIHGFRSLAAMIDDTPSGDSGESMNRPGSTNEQVQGAPAVKEPSENSAPNEPDQVTLLSSSPSLEQKDTLGKEVHMSSAEVLPQSSLGTAS</sequence>
<comment type="function">
    <text evidence="1">May negatively regulate the SNF1 kinase.</text>
</comment>
<comment type="subcellular location">
    <subcellularLocation>
        <location evidence="1">Cytoplasm</location>
    </subcellularLocation>
</comment>
<comment type="similarity">
    <text evidence="3">Belongs to the SIP5 family.</text>
</comment>
<gene>
    <name type="primary">SIP5</name>
    <name type="ORF">CIMG_04429</name>
</gene>
<protein>
    <recommendedName>
        <fullName>Protein SIP5</fullName>
    </recommendedName>
</protein>
<reference key="1">
    <citation type="journal article" date="2009" name="Genome Res.">
        <title>Comparative genomic analyses of the human fungal pathogens Coccidioides and their relatives.</title>
        <authorList>
            <person name="Sharpton T.J."/>
            <person name="Stajich J.E."/>
            <person name="Rounsley S.D."/>
            <person name="Gardner M.J."/>
            <person name="Wortman J.R."/>
            <person name="Jordar V.S."/>
            <person name="Maiti R."/>
            <person name="Kodira C.D."/>
            <person name="Neafsey D.E."/>
            <person name="Zeng Q."/>
            <person name="Hung C.-Y."/>
            <person name="McMahan C."/>
            <person name="Muszewska A."/>
            <person name="Grynberg M."/>
            <person name="Mandel M.A."/>
            <person name="Kellner E.M."/>
            <person name="Barker B.M."/>
            <person name="Galgiani J.N."/>
            <person name="Orbach M.J."/>
            <person name="Kirkland T.N."/>
            <person name="Cole G.T."/>
            <person name="Henn M.R."/>
            <person name="Birren B.W."/>
            <person name="Taylor J.W."/>
        </authorList>
    </citation>
    <scope>NUCLEOTIDE SEQUENCE [LARGE SCALE GENOMIC DNA]</scope>
    <source>
        <strain>RS</strain>
    </source>
</reference>
<reference key="2">
    <citation type="journal article" date="2010" name="Genome Res.">
        <title>Population genomic sequencing of Coccidioides fungi reveals recent hybridization and transposon control.</title>
        <authorList>
            <person name="Neafsey D.E."/>
            <person name="Barker B.M."/>
            <person name="Sharpton T.J."/>
            <person name="Stajich J.E."/>
            <person name="Park D.J."/>
            <person name="Whiston E."/>
            <person name="Hung C.-Y."/>
            <person name="McMahan C."/>
            <person name="White J."/>
            <person name="Sykes S."/>
            <person name="Heiman D."/>
            <person name="Young S."/>
            <person name="Zeng Q."/>
            <person name="Abouelleil A."/>
            <person name="Aftuck L."/>
            <person name="Bessette D."/>
            <person name="Brown A."/>
            <person name="FitzGerald M."/>
            <person name="Lui A."/>
            <person name="Macdonald J.P."/>
            <person name="Priest M."/>
            <person name="Orbach M.J."/>
            <person name="Galgiani J.N."/>
            <person name="Kirkland T.N."/>
            <person name="Cole G.T."/>
            <person name="Birren B.W."/>
            <person name="Henn M.R."/>
            <person name="Taylor J.W."/>
            <person name="Rounsley S.D."/>
        </authorList>
    </citation>
    <scope>GENOME REANNOTATION</scope>
    <source>
        <strain>RS</strain>
    </source>
</reference>
<accession>Q1DZ34</accession>
<accession>J3KDW3</accession>
<keyword id="KW-0963">Cytoplasm</keyword>
<keyword id="KW-1185">Reference proteome</keyword>
<name>SIP5_COCIM</name>